<sequence length="134" mass="14174">MSSLQAMKTLSLVLLVALLSMERAQGLRCYRCLAVLEGASCSVVSCPFLDGVCVSQKVSVFGSKVRGENKLSLLSCQKDVGFPLLKLTSAVVDSQISCCKGDLCNAVVLAASSPWALCVQLLLSLGSVFLWALL</sequence>
<feature type="signal peptide" evidence="3">
    <location>
        <begin position="1"/>
        <end position="26"/>
    </location>
</feature>
<feature type="chain" id="PRO_0000456449" description="Lymphocyte antigen 6S" evidence="3">
    <location>
        <begin position="27"/>
        <end position="134"/>
    </location>
</feature>
<feature type="propeptide" id="PRO_0000456450" description="Removed in mature form" evidence="3">
    <location>
        <begin position="106"/>
        <end position="134"/>
    </location>
</feature>
<feature type="domain" description="UPAR/Ly6" evidence="3">
    <location>
        <begin position="28"/>
        <end position="76"/>
    </location>
</feature>
<feature type="lipid moiety-binding region" description="GPI-anchor amidated asparagine" evidence="3">
    <location>
        <position position="105"/>
    </location>
</feature>
<feature type="disulfide bond" evidence="1 2">
    <location>
        <begin position="29"/>
        <end position="53"/>
    </location>
</feature>
<feature type="disulfide bond" evidence="1 2">
    <location>
        <begin position="32"/>
        <end position="41"/>
    </location>
</feature>
<feature type="disulfide bond" evidence="1 2">
    <location>
        <begin position="76"/>
        <end position="98"/>
    </location>
</feature>
<feature type="disulfide bond" evidence="1 2">
    <location>
        <begin position="99"/>
        <end position="104"/>
    </location>
</feature>
<protein>
    <recommendedName>
        <fullName evidence="4">Lymphocyte antigen 6S</fullName>
    </recommendedName>
</protein>
<keyword id="KW-1003">Cell membrane</keyword>
<keyword id="KW-1015">Disulfide bond</keyword>
<keyword id="KW-0325">Glycoprotein</keyword>
<keyword id="KW-0336">GPI-anchor</keyword>
<keyword id="KW-0449">Lipoprotein</keyword>
<keyword id="KW-0472">Membrane</keyword>
<keyword id="KW-1185">Reference proteome</keyword>
<keyword id="KW-0732">Signal</keyword>
<organism>
    <name type="scientific">Homo sapiens</name>
    <name type="common">Human</name>
    <dbReference type="NCBI Taxonomy" id="9606"/>
    <lineage>
        <taxon>Eukaryota</taxon>
        <taxon>Metazoa</taxon>
        <taxon>Chordata</taxon>
        <taxon>Craniata</taxon>
        <taxon>Vertebrata</taxon>
        <taxon>Euteleostomi</taxon>
        <taxon>Mammalia</taxon>
        <taxon>Eutheria</taxon>
        <taxon>Euarchontoglires</taxon>
        <taxon>Primates</taxon>
        <taxon>Haplorrhini</taxon>
        <taxon>Catarrhini</taxon>
        <taxon>Hominidae</taxon>
        <taxon>Homo</taxon>
    </lineage>
</organism>
<name>LY6S_HUMAN</name>
<dbReference type="EMBL" id="AC083982">
    <property type="status" value="NOT_ANNOTATED_CDS"/>
    <property type="molecule type" value="Genomic_DNA"/>
</dbReference>
<dbReference type="RefSeq" id="NP_001393406.1">
    <property type="nucleotide sequence ID" value="NM_001406477.1"/>
</dbReference>
<dbReference type="RefSeq" id="NP_001393407.1">
    <property type="nucleotide sequence ID" value="NM_001406478.1"/>
</dbReference>
<dbReference type="Ensembl" id="ENST00000706920.2">
    <property type="protein sequence ID" value="ENSP00000516627.1"/>
    <property type="gene ID" value="ENSG00000291309.2"/>
</dbReference>
<dbReference type="Ensembl" id="ENST00000715551.1">
    <property type="protein sequence ID" value="ENSP00000520471.1"/>
    <property type="gene ID" value="ENSG00000291309.2"/>
</dbReference>
<dbReference type="Ensembl" id="ENST00000715552.1">
    <property type="protein sequence ID" value="ENSP00000520472.1"/>
    <property type="gene ID" value="ENSG00000291309.2"/>
</dbReference>
<dbReference type="GeneID" id="105375795"/>
<dbReference type="MANE-Select" id="ENST00000706920.2">
    <property type="protein sequence ID" value="ENSP00000516627.1"/>
    <property type="RefSeq nucleotide sequence ID" value="NM_001406478.1"/>
    <property type="RefSeq protein sequence ID" value="NP_001393407.1"/>
</dbReference>
<dbReference type="AGR" id="HGNC:54397"/>
<dbReference type="GeneCards" id="LY6S"/>
<dbReference type="HGNC" id="HGNC:54397">
    <property type="gene designation" value="LY6S"/>
</dbReference>
<dbReference type="GeneTree" id="ENSGT00940000154560"/>
<dbReference type="PRO" id="PR:P0DTL4"/>
<dbReference type="Proteomes" id="UP000005640">
    <property type="component" value="Chromosome 8"/>
</dbReference>
<dbReference type="GO" id="GO:0005886">
    <property type="term" value="C:plasma membrane"/>
    <property type="evidence" value="ECO:0000318"/>
    <property type="project" value="GO_Central"/>
</dbReference>
<dbReference type="GO" id="GO:0098552">
    <property type="term" value="C:side of membrane"/>
    <property type="evidence" value="ECO:0007669"/>
    <property type="project" value="UniProtKB-KW"/>
</dbReference>
<dbReference type="GO" id="GO:0045202">
    <property type="term" value="C:synapse"/>
    <property type="evidence" value="ECO:0007669"/>
    <property type="project" value="GOC"/>
</dbReference>
<dbReference type="GO" id="GO:0033130">
    <property type="term" value="F:acetylcholine receptor binding"/>
    <property type="evidence" value="ECO:0000318"/>
    <property type="project" value="GO_Central"/>
</dbReference>
<dbReference type="GO" id="GO:0030550">
    <property type="term" value="F:acetylcholine receptor inhibitor activity"/>
    <property type="evidence" value="ECO:0000318"/>
    <property type="project" value="GO_Central"/>
</dbReference>
<dbReference type="GO" id="GO:0095500">
    <property type="term" value="P:acetylcholine receptor signaling pathway"/>
    <property type="evidence" value="ECO:0000318"/>
    <property type="project" value="GO_Central"/>
</dbReference>
<dbReference type="Gene3D" id="2.10.60.10">
    <property type="entry name" value="CD59"/>
    <property type="match status" value="1"/>
</dbReference>
<dbReference type="InterPro" id="IPR018363">
    <property type="entry name" value="CD59_antigen_CS"/>
</dbReference>
<dbReference type="InterPro" id="IPR016054">
    <property type="entry name" value="LY6_UPA_recep-like"/>
</dbReference>
<dbReference type="InterPro" id="IPR051445">
    <property type="entry name" value="LY6H/LY6L_nAChR_modulators"/>
</dbReference>
<dbReference type="InterPro" id="IPR045860">
    <property type="entry name" value="Snake_toxin-like_sf"/>
</dbReference>
<dbReference type="PANTHER" id="PTHR32217">
    <property type="entry name" value="LYMPHOCYTE ANTIGEN 6H"/>
    <property type="match status" value="1"/>
</dbReference>
<dbReference type="PANTHER" id="PTHR32217:SF3">
    <property type="entry name" value="LYMPHOCYTE ANTIGEN 6S"/>
    <property type="match status" value="1"/>
</dbReference>
<dbReference type="Pfam" id="PF00021">
    <property type="entry name" value="UPAR_LY6"/>
    <property type="match status" value="1"/>
</dbReference>
<dbReference type="SMART" id="SM00134">
    <property type="entry name" value="LU"/>
    <property type="match status" value="1"/>
</dbReference>
<dbReference type="SUPFAM" id="SSF57302">
    <property type="entry name" value="Snake toxin-like"/>
    <property type="match status" value="1"/>
</dbReference>
<dbReference type="PROSITE" id="PS00983">
    <property type="entry name" value="LY6_UPAR"/>
    <property type="match status" value="1"/>
</dbReference>
<accession>P0DTL4</accession>
<comment type="subcellular location">
    <subcellularLocation>
        <location evidence="3">Cell membrane</location>
        <topology evidence="3">Lipid-anchor</topology>
        <topology evidence="3">GPI-anchor</topology>
    </subcellularLocation>
</comment>
<gene>
    <name evidence="5" type="primary">LY6S</name>
</gene>
<proteinExistence type="inferred from homology"/>
<evidence type="ECO:0000250" key="1">
    <source>
        <dbReference type="UniProtKB" id="P0DP57"/>
    </source>
</evidence>
<evidence type="ECO:0000250" key="2">
    <source>
        <dbReference type="UniProtKB" id="P0DP58"/>
    </source>
</evidence>
<evidence type="ECO:0000255" key="3"/>
<evidence type="ECO:0000305" key="4"/>
<evidence type="ECO:0000312" key="5">
    <source>
        <dbReference type="HGNC" id="HGNC:54397"/>
    </source>
</evidence>
<reference key="1">
    <citation type="journal article" date="2006" name="Nature">
        <title>DNA sequence and analysis of human chromosome 8.</title>
        <authorList>
            <person name="Nusbaum C."/>
            <person name="Mikkelsen T.S."/>
            <person name="Zody M.C."/>
            <person name="Asakawa S."/>
            <person name="Taudien S."/>
            <person name="Garber M."/>
            <person name="Kodira C.D."/>
            <person name="Schueler M.G."/>
            <person name="Shimizu A."/>
            <person name="Whittaker C.A."/>
            <person name="Chang J.L."/>
            <person name="Cuomo C.A."/>
            <person name="Dewar K."/>
            <person name="FitzGerald M.G."/>
            <person name="Yang X."/>
            <person name="Allen N.R."/>
            <person name="Anderson S."/>
            <person name="Asakawa T."/>
            <person name="Blechschmidt K."/>
            <person name="Bloom T."/>
            <person name="Borowsky M.L."/>
            <person name="Butler J."/>
            <person name="Cook A."/>
            <person name="Corum B."/>
            <person name="DeArellano K."/>
            <person name="DeCaprio D."/>
            <person name="Dooley K.T."/>
            <person name="Dorris L. III"/>
            <person name="Engels R."/>
            <person name="Gloeckner G."/>
            <person name="Hafez N."/>
            <person name="Hagopian D.S."/>
            <person name="Hall J.L."/>
            <person name="Ishikawa S.K."/>
            <person name="Jaffe D.B."/>
            <person name="Kamat A."/>
            <person name="Kudoh J."/>
            <person name="Lehmann R."/>
            <person name="Lokitsang T."/>
            <person name="Macdonald P."/>
            <person name="Major J.E."/>
            <person name="Matthews C.D."/>
            <person name="Mauceli E."/>
            <person name="Menzel U."/>
            <person name="Mihalev A.H."/>
            <person name="Minoshima S."/>
            <person name="Murayama Y."/>
            <person name="Naylor J.W."/>
            <person name="Nicol R."/>
            <person name="Nguyen C."/>
            <person name="O'Leary S.B."/>
            <person name="O'Neill K."/>
            <person name="Parker S.C.J."/>
            <person name="Polley A."/>
            <person name="Raymond C.K."/>
            <person name="Reichwald K."/>
            <person name="Rodriguez J."/>
            <person name="Sasaki T."/>
            <person name="Schilhabel M."/>
            <person name="Siddiqui R."/>
            <person name="Smith C.L."/>
            <person name="Sneddon T.P."/>
            <person name="Talamas J.A."/>
            <person name="Tenzin P."/>
            <person name="Topham K."/>
            <person name="Venkataraman V."/>
            <person name="Wen G."/>
            <person name="Yamazaki S."/>
            <person name="Young S.K."/>
            <person name="Zeng Q."/>
            <person name="Zimmer A.R."/>
            <person name="Rosenthal A."/>
            <person name="Birren B.W."/>
            <person name="Platzer M."/>
            <person name="Shimizu N."/>
            <person name="Lander E.S."/>
        </authorList>
    </citation>
    <scope>NUCLEOTIDE SEQUENCE [LARGE SCALE GENOMIC DNA]</scope>
</reference>